<organism>
    <name type="scientific">Saccharophagus degradans (strain 2-40 / ATCC 43961 / DSM 17024)</name>
    <dbReference type="NCBI Taxonomy" id="203122"/>
    <lineage>
        <taxon>Bacteria</taxon>
        <taxon>Pseudomonadati</taxon>
        <taxon>Pseudomonadota</taxon>
        <taxon>Gammaproteobacteria</taxon>
        <taxon>Cellvibrionales</taxon>
        <taxon>Cellvibrionaceae</taxon>
        <taxon>Saccharophagus</taxon>
    </lineage>
</organism>
<gene>
    <name evidence="1" type="primary">lpxC</name>
    <name type="ordered locus">Sde_0854</name>
</gene>
<keyword id="KW-0378">Hydrolase</keyword>
<keyword id="KW-0441">Lipid A biosynthesis</keyword>
<keyword id="KW-0444">Lipid biosynthesis</keyword>
<keyword id="KW-0443">Lipid metabolism</keyword>
<keyword id="KW-0479">Metal-binding</keyword>
<keyword id="KW-1185">Reference proteome</keyword>
<keyword id="KW-0862">Zinc</keyword>
<evidence type="ECO:0000255" key="1">
    <source>
        <dbReference type="HAMAP-Rule" id="MF_00388"/>
    </source>
</evidence>
<sequence>MIKQRTLKNEIRATGVGLHTGQKVYLTLLPAPVDAGIVFRRVDLNPVVEIPAKAANVGDTTLSTTLIQDGVRVSTVEHLLSAMAGLGIDNAIIEVSADEVPIMDGSAGPFVFLIQSAGIVEQNAAKKFIRIKKPITVQDGDKSASFLPFEGFKVSFTIDFDHPVFRGRKLDATVDFSSTSFVKEVSRARTFGFMHEIEYLRSKGLAKGGSVDNAIVVDKFRILNEDGLRYEDEFVKHKILDAIGDLYLLGTSLIGEYKAYKSGHGLNNKSLLELIKQEDAWEMVTFEDDEVAPISYIKPLLAV</sequence>
<feature type="chain" id="PRO_0000253692" description="UDP-3-O-acyl-N-acetylglucosamine deacetylase">
    <location>
        <begin position="1"/>
        <end position="303"/>
    </location>
</feature>
<feature type="active site" description="Proton donor" evidence="1">
    <location>
        <position position="264"/>
    </location>
</feature>
<feature type="binding site" evidence="1">
    <location>
        <position position="78"/>
    </location>
    <ligand>
        <name>Zn(2+)</name>
        <dbReference type="ChEBI" id="CHEBI:29105"/>
    </ligand>
</feature>
<feature type="binding site" evidence="1">
    <location>
        <position position="237"/>
    </location>
    <ligand>
        <name>Zn(2+)</name>
        <dbReference type="ChEBI" id="CHEBI:29105"/>
    </ligand>
</feature>
<feature type="binding site" evidence="1">
    <location>
        <position position="241"/>
    </location>
    <ligand>
        <name>Zn(2+)</name>
        <dbReference type="ChEBI" id="CHEBI:29105"/>
    </ligand>
</feature>
<reference key="1">
    <citation type="journal article" date="2008" name="PLoS Genet.">
        <title>Complete genome sequence of the complex carbohydrate-degrading marine bacterium, Saccharophagus degradans strain 2-40 T.</title>
        <authorList>
            <person name="Weiner R.M."/>
            <person name="Taylor L.E. II"/>
            <person name="Henrissat B."/>
            <person name="Hauser L."/>
            <person name="Land M."/>
            <person name="Coutinho P.M."/>
            <person name="Rancurel C."/>
            <person name="Saunders E.H."/>
            <person name="Longmire A.G."/>
            <person name="Zhang H."/>
            <person name="Bayer E.A."/>
            <person name="Gilbert H.J."/>
            <person name="Larimer F."/>
            <person name="Zhulin I.B."/>
            <person name="Ekborg N.A."/>
            <person name="Lamed R."/>
            <person name="Richardson P.M."/>
            <person name="Borovok I."/>
            <person name="Hutcheson S."/>
        </authorList>
    </citation>
    <scope>NUCLEOTIDE SEQUENCE [LARGE SCALE GENOMIC DNA]</scope>
    <source>
        <strain>2-40 / ATCC 43961 / DSM 17024</strain>
    </source>
</reference>
<comment type="function">
    <text evidence="1">Catalyzes the hydrolysis of UDP-3-O-myristoyl-N-acetylglucosamine to form UDP-3-O-myristoylglucosamine and acetate, the committed step in lipid A biosynthesis.</text>
</comment>
<comment type="catalytic activity">
    <reaction evidence="1">
        <text>a UDP-3-O-[(3R)-3-hydroxyacyl]-N-acetyl-alpha-D-glucosamine + H2O = a UDP-3-O-[(3R)-3-hydroxyacyl]-alpha-D-glucosamine + acetate</text>
        <dbReference type="Rhea" id="RHEA:67816"/>
        <dbReference type="ChEBI" id="CHEBI:15377"/>
        <dbReference type="ChEBI" id="CHEBI:30089"/>
        <dbReference type="ChEBI" id="CHEBI:137740"/>
        <dbReference type="ChEBI" id="CHEBI:173225"/>
        <dbReference type="EC" id="3.5.1.108"/>
    </reaction>
</comment>
<comment type="cofactor">
    <cofactor evidence="1">
        <name>Zn(2+)</name>
        <dbReference type="ChEBI" id="CHEBI:29105"/>
    </cofactor>
</comment>
<comment type="pathway">
    <text evidence="1">Glycolipid biosynthesis; lipid IV(A) biosynthesis; lipid IV(A) from (3R)-3-hydroxytetradecanoyl-[acyl-carrier-protein] and UDP-N-acetyl-alpha-D-glucosamine: step 2/6.</text>
</comment>
<comment type="similarity">
    <text evidence="1">Belongs to the LpxC family.</text>
</comment>
<dbReference type="EC" id="3.5.1.108" evidence="1"/>
<dbReference type="EMBL" id="CP000282">
    <property type="protein sequence ID" value="ABD80116.1"/>
    <property type="molecule type" value="Genomic_DNA"/>
</dbReference>
<dbReference type="RefSeq" id="WP_011467337.1">
    <property type="nucleotide sequence ID" value="NC_007912.1"/>
</dbReference>
<dbReference type="SMR" id="Q21MG3"/>
<dbReference type="STRING" id="203122.Sde_0854"/>
<dbReference type="GeneID" id="98612536"/>
<dbReference type="KEGG" id="sde:Sde_0854"/>
<dbReference type="eggNOG" id="COG0774">
    <property type="taxonomic scope" value="Bacteria"/>
</dbReference>
<dbReference type="HOGENOM" id="CLU_046528_1_0_6"/>
<dbReference type="OrthoDB" id="9802746at2"/>
<dbReference type="UniPathway" id="UPA00359">
    <property type="reaction ID" value="UER00478"/>
</dbReference>
<dbReference type="Proteomes" id="UP000001947">
    <property type="component" value="Chromosome"/>
</dbReference>
<dbReference type="GO" id="GO:0016020">
    <property type="term" value="C:membrane"/>
    <property type="evidence" value="ECO:0007669"/>
    <property type="project" value="GOC"/>
</dbReference>
<dbReference type="GO" id="GO:0046872">
    <property type="term" value="F:metal ion binding"/>
    <property type="evidence" value="ECO:0007669"/>
    <property type="project" value="UniProtKB-KW"/>
</dbReference>
<dbReference type="GO" id="GO:0103117">
    <property type="term" value="F:UDP-3-O-acyl-N-acetylglucosamine deacetylase activity"/>
    <property type="evidence" value="ECO:0007669"/>
    <property type="project" value="UniProtKB-UniRule"/>
</dbReference>
<dbReference type="GO" id="GO:0009245">
    <property type="term" value="P:lipid A biosynthetic process"/>
    <property type="evidence" value="ECO:0007669"/>
    <property type="project" value="UniProtKB-UniRule"/>
</dbReference>
<dbReference type="Gene3D" id="3.30.230.20">
    <property type="entry name" value="lpxc deacetylase, domain 1"/>
    <property type="match status" value="1"/>
</dbReference>
<dbReference type="Gene3D" id="3.30.1700.10">
    <property type="entry name" value="lpxc deacetylase, domain 2"/>
    <property type="match status" value="1"/>
</dbReference>
<dbReference type="HAMAP" id="MF_00388">
    <property type="entry name" value="LpxC"/>
    <property type="match status" value="1"/>
</dbReference>
<dbReference type="InterPro" id="IPR020568">
    <property type="entry name" value="Ribosomal_Su5_D2-typ_SF"/>
</dbReference>
<dbReference type="InterPro" id="IPR004463">
    <property type="entry name" value="UDP-acyl_GlcNac_deAcase"/>
</dbReference>
<dbReference type="InterPro" id="IPR011334">
    <property type="entry name" value="UDP-acyl_GlcNac_deAcase_C"/>
</dbReference>
<dbReference type="InterPro" id="IPR015870">
    <property type="entry name" value="UDP-acyl_N-AcGlcN_deAcase_N"/>
</dbReference>
<dbReference type="NCBIfam" id="TIGR00325">
    <property type="entry name" value="lpxC"/>
    <property type="match status" value="1"/>
</dbReference>
<dbReference type="PANTHER" id="PTHR33694">
    <property type="entry name" value="UDP-3-O-ACYL-N-ACETYLGLUCOSAMINE DEACETYLASE 1, MITOCHONDRIAL-RELATED"/>
    <property type="match status" value="1"/>
</dbReference>
<dbReference type="PANTHER" id="PTHR33694:SF1">
    <property type="entry name" value="UDP-3-O-ACYL-N-ACETYLGLUCOSAMINE DEACETYLASE 1, MITOCHONDRIAL-RELATED"/>
    <property type="match status" value="1"/>
</dbReference>
<dbReference type="Pfam" id="PF03331">
    <property type="entry name" value="LpxC"/>
    <property type="match status" value="1"/>
</dbReference>
<dbReference type="SUPFAM" id="SSF54211">
    <property type="entry name" value="Ribosomal protein S5 domain 2-like"/>
    <property type="match status" value="2"/>
</dbReference>
<name>LPXC_SACD2</name>
<protein>
    <recommendedName>
        <fullName evidence="1">UDP-3-O-acyl-N-acetylglucosamine deacetylase</fullName>
        <shortName evidence="1">UDP-3-O-acyl-GlcNAc deacetylase</shortName>
        <ecNumber evidence="1">3.5.1.108</ecNumber>
    </recommendedName>
    <alternativeName>
        <fullName evidence="1">UDP-3-O-[R-3-hydroxymyristoyl]-N-acetylglucosamine deacetylase</fullName>
    </alternativeName>
</protein>
<accession>Q21MG3</accession>
<proteinExistence type="inferred from homology"/>